<accession>Q54WG6</accession>
<reference key="1">
    <citation type="journal article" date="2005" name="Nature">
        <title>The genome of the social amoeba Dictyostelium discoideum.</title>
        <authorList>
            <person name="Eichinger L."/>
            <person name="Pachebat J.A."/>
            <person name="Gloeckner G."/>
            <person name="Rajandream M.A."/>
            <person name="Sucgang R."/>
            <person name="Berriman M."/>
            <person name="Song J."/>
            <person name="Olsen R."/>
            <person name="Szafranski K."/>
            <person name="Xu Q."/>
            <person name="Tunggal B."/>
            <person name="Kummerfeld S."/>
            <person name="Madera M."/>
            <person name="Konfortov B.A."/>
            <person name="Rivero F."/>
            <person name="Bankier A.T."/>
            <person name="Lehmann R."/>
            <person name="Hamlin N."/>
            <person name="Davies R."/>
            <person name="Gaudet P."/>
            <person name="Fey P."/>
            <person name="Pilcher K."/>
            <person name="Chen G."/>
            <person name="Saunders D."/>
            <person name="Sodergren E.J."/>
            <person name="Davis P."/>
            <person name="Kerhornou A."/>
            <person name="Nie X."/>
            <person name="Hall N."/>
            <person name="Anjard C."/>
            <person name="Hemphill L."/>
            <person name="Bason N."/>
            <person name="Farbrother P."/>
            <person name="Desany B."/>
            <person name="Just E."/>
            <person name="Morio T."/>
            <person name="Rost R."/>
            <person name="Churcher C.M."/>
            <person name="Cooper J."/>
            <person name="Haydock S."/>
            <person name="van Driessche N."/>
            <person name="Cronin A."/>
            <person name="Goodhead I."/>
            <person name="Muzny D.M."/>
            <person name="Mourier T."/>
            <person name="Pain A."/>
            <person name="Lu M."/>
            <person name="Harper D."/>
            <person name="Lindsay R."/>
            <person name="Hauser H."/>
            <person name="James K.D."/>
            <person name="Quiles M."/>
            <person name="Madan Babu M."/>
            <person name="Saito T."/>
            <person name="Buchrieser C."/>
            <person name="Wardroper A."/>
            <person name="Felder M."/>
            <person name="Thangavelu M."/>
            <person name="Johnson D."/>
            <person name="Knights A."/>
            <person name="Loulseged H."/>
            <person name="Mungall K.L."/>
            <person name="Oliver K."/>
            <person name="Price C."/>
            <person name="Quail M.A."/>
            <person name="Urushihara H."/>
            <person name="Hernandez J."/>
            <person name="Rabbinowitsch E."/>
            <person name="Steffen D."/>
            <person name="Sanders M."/>
            <person name="Ma J."/>
            <person name="Kohara Y."/>
            <person name="Sharp S."/>
            <person name="Simmonds M.N."/>
            <person name="Spiegler S."/>
            <person name="Tivey A."/>
            <person name="Sugano S."/>
            <person name="White B."/>
            <person name="Walker D."/>
            <person name="Woodward J.R."/>
            <person name="Winckler T."/>
            <person name="Tanaka Y."/>
            <person name="Shaulsky G."/>
            <person name="Schleicher M."/>
            <person name="Weinstock G.M."/>
            <person name="Rosenthal A."/>
            <person name="Cox E.C."/>
            <person name="Chisholm R.L."/>
            <person name="Gibbs R.A."/>
            <person name="Loomis W.F."/>
            <person name="Platzer M."/>
            <person name="Kay R.R."/>
            <person name="Williams J.G."/>
            <person name="Dear P.H."/>
            <person name="Noegel A.A."/>
            <person name="Barrell B.G."/>
            <person name="Kuspa A."/>
        </authorList>
    </citation>
    <scope>NUCLEOTIDE SEQUENCE [LARGE SCALE GENOMIC DNA]</scope>
    <source>
        <strain>AX4</strain>
    </source>
</reference>
<reference key="2">
    <citation type="journal article" date="2005" name="Curr. Biol.">
        <title>DNA-PKcs-dependent signaling of DNA damage in Dictyostelium discoideum.</title>
        <authorList>
            <person name="Hudson J.J.R."/>
            <person name="Hsu D.-W."/>
            <person name="Guo K."/>
            <person name="Zhukovskaya N."/>
            <person name="Liu P.-H."/>
            <person name="Williams J.G."/>
            <person name="Pears C.J."/>
            <person name="Lakin N.D."/>
        </authorList>
    </citation>
    <scope>PHOSPHORYLATION</scope>
    <scope>FUNCTION</scope>
</reference>
<sequence>MSETKPASSKPAAAAKPKKVIPRVSRTGEPKSKPESRSARAGITFPVSRVDRLLREGRFAPRVESTAPVYLAAVLEYLVFEILELAHNTCSISKKTRITPQHINWAVGNDLELNSLFQHVTIAYGGVLPTPQQSTGEKKKKPSKKAAEGSSQIY</sequence>
<proteinExistence type="evidence at protein level"/>
<feature type="chain" id="PRO_0000389153" description="Histone H2AX">
    <location>
        <begin position="1"/>
        <end position="154"/>
    </location>
</feature>
<feature type="region of interest" description="Disordered" evidence="2">
    <location>
        <begin position="1"/>
        <end position="41"/>
    </location>
</feature>
<feature type="region of interest" description="Disordered" evidence="2">
    <location>
        <begin position="128"/>
        <end position="154"/>
    </location>
</feature>
<feature type="short sequence motif" description="[ST]-Q motif">
    <location>
        <begin position="151"/>
        <end position="152"/>
    </location>
</feature>
<feature type="compositionally biased region" description="Low complexity" evidence="2">
    <location>
        <begin position="1"/>
        <end position="15"/>
    </location>
</feature>
<feature type="compositionally biased region" description="Basic and acidic residues" evidence="2">
    <location>
        <begin position="26"/>
        <end position="38"/>
    </location>
</feature>
<feature type="modified residue" description="Phosphoserine" evidence="1">
    <location>
        <position position="151"/>
    </location>
</feature>
<evidence type="ECO:0000250" key="1"/>
<evidence type="ECO:0000256" key="2">
    <source>
        <dbReference type="SAM" id="MobiDB-lite"/>
    </source>
</evidence>
<evidence type="ECO:0000269" key="3">
    <source>
    </source>
</evidence>
<evidence type="ECO:0000305" key="4"/>
<organism>
    <name type="scientific">Dictyostelium discoideum</name>
    <name type="common">Social amoeba</name>
    <dbReference type="NCBI Taxonomy" id="44689"/>
    <lineage>
        <taxon>Eukaryota</taxon>
        <taxon>Amoebozoa</taxon>
        <taxon>Evosea</taxon>
        <taxon>Eumycetozoa</taxon>
        <taxon>Dictyostelia</taxon>
        <taxon>Dictyosteliales</taxon>
        <taxon>Dictyosteliaceae</taxon>
        <taxon>Dictyostelium</taxon>
    </lineage>
</organism>
<protein>
    <recommendedName>
        <fullName>Histone H2AX</fullName>
        <shortName>H2a/x</shortName>
    </recommendedName>
    <alternativeName>
        <fullName>Histone H2A.X</fullName>
    </alternativeName>
</protein>
<gene>
    <name type="primary">H2AX</name>
    <name type="ORF">DDB_G0279667</name>
</gene>
<dbReference type="EMBL" id="AAFI02000032">
    <property type="protein sequence ID" value="EAL67608.1"/>
    <property type="molecule type" value="Genomic_DNA"/>
</dbReference>
<dbReference type="RefSeq" id="XP_641587.1">
    <property type="nucleotide sequence ID" value="XM_636495.1"/>
</dbReference>
<dbReference type="SMR" id="Q54WG6"/>
<dbReference type="FunCoup" id="Q54WG6">
    <property type="interactions" value="489"/>
</dbReference>
<dbReference type="STRING" id="44689.Q54WG6"/>
<dbReference type="GlyGen" id="Q54WG6">
    <property type="glycosylation" value="1 site"/>
</dbReference>
<dbReference type="iPTMnet" id="Q54WG6"/>
<dbReference type="PaxDb" id="44689-DDB0216271"/>
<dbReference type="EnsemblProtists" id="EAL67608">
    <property type="protein sequence ID" value="EAL67608"/>
    <property type="gene ID" value="DDB_G0279667"/>
</dbReference>
<dbReference type="GeneID" id="8622161"/>
<dbReference type="KEGG" id="ddi:DDB_G0279667"/>
<dbReference type="dictyBase" id="DDB_G0279667">
    <property type="gene designation" value="H2AX"/>
</dbReference>
<dbReference type="VEuPathDB" id="AmoebaDB:DDB_G0279667"/>
<dbReference type="eggNOG" id="KOG1756">
    <property type="taxonomic scope" value="Eukaryota"/>
</dbReference>
<dbReference type="HOGENOM" id="CLU_062828_3_1_1"/>
<dbReference type="InParanoid" id="Q54WG6"/>
<dbReference type="OMA" id="CALESQH"/>
<dbReference type="PhylomeDB" id="Q54WG6"/>
<dbReference type="Reactome" id="R-DDI-2299718">
    <property type="pathway name" value="Condensation of Prophase Chromosomes"/>
</dbReference>
<dbReference type="Reactome" id="R-DDI-2559580">
    <property type="pathway name" value="Oxidative Stress Induced Senescence"/>
</dbReference>
<dbReference type="Reactome" id="R-DDI-3214815">
    <property type="pathway name" value="HDACs deacetylate histones"/>
</dbReference>
<dbReference type="Reactome" id="R-DDI-3214858">
    <property type="pathway name" value="RMTs methylate histone arginines"/>
</dbReference>
<dbReference type="Reactome" id="R-DDI-427359">
    <property type="pathway name" value="SIRT1 negatively regulates rRNA expression"/>
</dbReference>
<dbReference type="Reactome" id="R-DDI-5625886">
    <property type="pathway name" value="Activated PKN1 stimulates transcription of AR (androgen receptor) regulated genes KLK2 and KLK3"/>
</dbReference>
<dbReference type="Reactome" id="R-DDI-5689880">
    <property type="pathway name" value="Ub-specific processing proteases"/>
</dbReference>
<dbReference type="Reactome" id="R-DDI-5689901">
    <property type="pathway name" value="Metalloprotease DUBs"/>
</dbReference>
<dbReference type="Reactome" id="R-DDI-5693565">
    <property type="pathway name" value="Recruitment and ATM-mediated phosphorylation of repair and signaling proteins at DNA double strand breaks"/>
</dbReference>
<dbReference type="Reactome" id="R-DDI-68616">
    <property type="pathway name" value="Assembly of the ORC complex at the origin of replication"/>
</dbReference>
<dbReference type="Reactome" id="R-DDI-73772">
    <property type="pathway name" value="RNA Polymerase I Promoter Escape"/>
</dbReference>
<dbReference type="Reactome" id="R-DDI-9843940">
    <property type="pathway name" value="Regulation of endogenous retroelements by KRAB-ZFP proteins"/>
</dbReference>
<dbReference type="PRO" id="PR:Q54WG6"/>
<dbReference type="Proteomes" id="UP000002195">
    <property type="component" value="Chromosome 3"/>
</dbReference>
<dbReference type="GO" id="GO:0000786">
    <property type="term" value="C:nucleosome"/>
    <property type="evidence" value="ECO:0000318"/>
    <property type="project" value="GO_Central"/>
</dbReference>
<dbReference type="GO" id="GO:0005634">
    <property type="term" value="C:nucleus"/>
    <property type="evidence" value="ECO:0000250"/>
    <property type="project" value="dictyBase"/>
</dbReference>
<dbReference type="GO" id="GO:0003677">
    <property type="term" value="F:DNA binding"/>
    <property type="evidence" value="ECO:0007669"/>
    <property type="project" value="UniProtKB-KW"/>
</dbReference>
<dbReference type="GO" id="GO:0046982">
    <property type="term" value="F:protein heterodimerization activity"/>
    <property type="evidence" value="ECO:0007669"/>
    <property type="project" value="InterPro"/>
</dbReference>
<dbReference type="GO" id="GO:0030527">
    <property type="term" value="F:structural constituent of chromatin"/>
    <property type="evidence" value="ECO:0000314"/>
    <property type="project" value="dictyBase"/>
</dbReference>
<dbReference type="GO" id="GO:0006338">
    <property type="term" value="P:chromatin remodeling"/>
    <property type="evidence" value="ECO:0000314"/>
    <property type="project" value="dictyBase"/>
</dbReference>
<dbReference type="GO" id="GO:0006281">
    <property type="term" value="P:DNA repair"/>
    <property type="evidence" value="ECO:0007669"/>
    <property type="project" value="UniProtKB-KW"/>
</dbReference>
<dbReference type="GO" id="GO:0031507">
    <property type="term" value="P:heterochromatin formation"/>
    <property type="evidence" value="ECO:0000318"/>
    <property type="project" value="GO_Central"/>
</dbReference>
<dbReference type="CDD" id="cd00074">
    <property type="entry name" value="HFD_H2A"/>
    <property type="match status" value="1"/>
</dbReference>
<dbReference type="FunFam" id="1.10.20.10:FF:000093">
    <property type="entry name" value="Histone H2A"/>
    <property type="match status" value="1"/>
</dbReference>
<dbReference type="Gene3D" id="1.10.20.10">
    <property type="entry name" value="Histone, subunit A"/>
    <property type="match status" value="1"/>
</dbReference>
<dbReference type="InterPro" id="IPR009072">
    <property type="entry name" value="Histone-fold"/>
</dbReference>
<dbReference type="InterPro" id="IPR002119">
    <property type="entry name" value="Histone_H2A"/>
</dbReference>
<dbReference type="InterPro" id="IPR007125">
    <property type="entry name" value="Histone_H2A/H2B/H3"/>
</dbReference>
<dbReference type="InterPro" id="IPR032454">
    <property type="entry name" value="Histone_H2A_C"/>
</dbReference>
<dbReference type="PANTHER" id="PTHR23430">
    <property type="entry name" value="HISTONE H2A"/>
    <property type="match status" value="1"/>
</dbReference>
<dbReference type="Pfam" id="PF00125">
    <property type="entry name" value="Histone"/>
    <property type="match status" value="1"/>
</dbReference>
<dbReference type="Pfam" id="PF16211">
    <property type="entry name" value="Histone_H2A_C"/>
    <property type="match status" value="1"/>
</dbReference>
<dbReference type="PRINTS" id="PR00620">
    <property type="entry name" value="HISTONEH2A"/>
</dbReference>
<dbReference type="SMART" id="SM00414">
    <property type="entry name" value="H2A"/>
    <property type="match status" value="1"/>
</dbReference>
<dbReference type="SUPFAM" id="SSF47113">
    <property type="entry name" value="Histone-fold"/>
    <property type="match status" value="1"/>
</dbReference>
<name>H2AX_DICDI</name>
<comment type="function">
    <text evidence="1 3">Core component of nucleosome which plays a central role in DNA double strand break (DSB) repair. Nucleosomes wrap and compact DNA into chromatin, limiting DNA accessibility to the cellular machineries which require DNA as a template. Histones thereby play a central role in transcription regulation, DNA repair, DNA replication and chromosomal stability. DNA accessibility is regulated via a complex set of post-translational modifications of histones, also called histone code, and nucleosome remodeling (By similarity). Phosphorylation of H2AX seems to be performed by atr1 and/or possibly dnapkcs, as ATM ortholog is absent in the genome of this organism.</text>
</comment>
<comment type="subunit">
    <text evidence="1">The nucleosome is a histone octamer containing two molecules each of H2A, H2B, H3 and H4 assembled in one H3-H4 heterotetramer and two H2A-H2B heterodimers. The octamer wraps approximately 147 bp of DNA (By similarity).</text>
</comment>
<comment type="subcellular location">
    <subcellularLocation>
        <location evidence="1">Nucleus</location>
    </subcellularLocation>
    <subcellularLocation>
        <location evidence="1">Chromosome</location>
    </subcellularLocation>
</comment>
<comment type="domain">
    <text evidence="1">The [ST]-Q motif constitutes a recognition sequence for kinases from the PI3/PI4-kinase family.</text>
</comment>
<comment type="PTM">
    <text evidence="1">Phosphorylated at Ser-151 to form H2AS128ph (gamma-H2AX) in response to DNA double-strand breaks (DSBs) generated by exogenous genotoxic agents and by stalled replication forks. Phosphorylation is dependent on the DNA damage checkpoint kinase atr1 and/or possibly dnapkcs, spreads on either side of a detected DSB site and may mark the surrounding chromatin for recruitment of proteins required for DNA damage signaling and repair. Gamma-H2AX is removed from the DNA prior to the strand invasion-primer extension step of the repair process and subsequently dephosphorylated. Dephosphorylation is necessary for efficient recovery from the DNA damage checkpoint (By similarity).</text>
</comment>
<comment type="similarity">
    <text evidence="4">Belongs to the histone H2A family.</text>
</comment>
<comment type="caution">
    <text evidence="4">To ensure consistency between histone entries, we follow the 'Brno' nomenclature for histone modifications, with positions referring to those used in the literature for the 'closest' model organism. Due to slight variations in histone sequences between organisms and to the presence of initiator methionine in UniProtKB/Swiss-Prot sequences, the actual positions of modified amino acids in the sequence generally differ. In this entry the following convention is used: H2AS128ph = phosphorylated Ser-151.</text>
</comment>
<keyword id="KW-0158">Chromosome</keyword>
<keyword id="KW-0227">DNA damage</keyword>
<keyword id="KW-0234">DNA repair</keyword>
<keyword id="KW-0238">DNA-binding</keyword>
<keyword id="KW-0544">Nucleosome core</keyword>
<keyword id="KW-0539">Nucleus</keyword>
<keyword id="KW-0597">Phosphoprotein</keyword>
<keyword id="KW-1185">Reference proteome</keyword>